<protein>
    <recommendedName>
        <fullName evidence="1">Endonuclease 8</fullName>
    </recommendedName>
    <alternativeName>
        <fullName evidence="1">DNA glycosylase/AP lyase Nei</fullName>
        <ecNumber evidence="1">3.2.2.-</ecNumber>
        <ecNumber evidence="1">4.2.99.18</ecNumber>
    </alternativeName>
    <alternativeName>
        <fullName evidence="1">DNA-(apurinic or apyrimidinic site) lyase Nei</fullName>
    </alternativeName>
    <alternativeName>
        <fullName evidence="1">Endonuclease VIII</fullName>
    </alternativeName>
</protein>
<comment type="function">
    <text evidence="1">Involved in base excision repair of DNA damaged by oxidation or by mutagenic agents. Acts as a DNA glycosylase that recognizes and removes damaged bases. Has a preference for oxidized pyrimidines, such as thymine glycol, 5,6-dihydrouracil and 5,6-dihydrothymine. Has AP (apurinic/apyrimidinic) lyase activity and introduces nicks in the DNA strand. Cleaves the DNA backbone by beta-delta elimination to generate a single-strand break at the site of the removed base with both 3'- and 5'-phosphates.</text>
</comment>
<comment type="catalytic activity">
    <reaction evidence="1">
        <text>2'-deoxyribonucleotide-(2'-deoxyribose 5'-phosphate)-2'-deoxyribonucleotide-DNA = a 3'-end 2'-deoxyribonucleotide-(2,3-dehydro-2,3-deoxyribose 5'-phosphate)-DNA + a 5'-end 5'-phospho-2'-deoxyribonucleoside-DNA + H(+)</text>
        <dbReference type="Rhea" id="RHEA:66592"/>
        <dbReference type="Rhea" id="RHEA-COMP:13180"/>
        <dbReference type="Rhea" id="RHEA-COMP:16897"/>
        <dbReference type="Rhea" id="RHEA-COMP:17067"/>
        <dbReference type="ChEBI" id="CHEBI:15378"/>
        <dbReference type="ChEBI" id="CHEBI:136412"/>
        <dbReference type="ChEBI" id="CHEBI:157695"/>
        <dbReference type="ChEBI" id="CHEBI:167181"/>
        <dbReference type="EC" id="4.2.99.18"/>
    </reaction>
</comment>
<comment type="cofactor">
    <cofactor evidence="1">
        <name>Zn(2+)</name>
        <dbReference type="ChEBI" id="CHEBI:29105"/>
    </cofactor>
    <text evidence="1">Binds 1 zinc ion per subunit.</text>
</comment>
<comment type="similarity">
    <text evidence="1">Belongs to the FPG family.</text>
</comment>
<keyword id="KW-0227">DNA damage</keyword>
<keyword id="KW-0234">DNA repair</keyword>
<keyword id="KW-0238">DNA-binding</keyword>
<keyword id="KW-0326">Glycosidase</keyword>
<keyword id="KW-0378">Hydrolase</keyword>
<keyword id="KW-0456">Lyase</keyword>
<keyword id="KW-0479">Metal-binding</keyword>
<keyword id="KW-0511">Multifunctional enzyme</keyword>
<keyword id="KW-0862">Zinc</keyword>
<keyword id="KW-0863">Zinc-finger</keyword>
<accession>B5BC82</accession>
<gene>
    <name evidence="1" type="primary">nei</name>
    <name type="ordered locus">SSPA1877</name>
</gene>
<feature type="initiator methionine" description="Removed" evidence="1">
    <location>
        <position position="1"/>
    </location>
</feature>
<feature type="chain" id="PRO_1000139945" description="Endonuclease 8">
    <location>
        <begin position="2"/>
        <end position="263"/>
    </location>
</feature>
<feature type="zinc finger region" description="FPG-type" evidence="1">
    <location>
        <begin position="229"/>
        <end position="263"/>
    </location>
</feature>
<feature type="active site" description="Schiff-base intermediate with DNA" evidence="1">
    <location>
        <position position="2"/>
    </location>
</feature>
<feature type="active site" description="Proton donor" evidence="1">
    <location>
        <position position="3"/>
    </location>
</feature>
<feature type="active site" description="Proton donor; for beta-elimination activity" evidence="1">
    <location>
        <position position="53"/>
    </location>
</feature>
<feature type="active site" description="Proton donor; for delta-elimination activity" evidence="1">
    <location>
        <position position="253"/>
    </location>
</feature>
<feature type="binding site" evidence="1">
    <location>
        <position position="70"/>
    </location>
    <ligand>
        <name>DNA</name>
        <dbReference type="ChEBI" id="CHEBI:16991"/>
    </ligand>
</feature>
<feature type="binding site" evidence="1">
    <location>
        <position position="125"/>
    </location>
    <ligand>
        <name>DNA</name>
        <dbReference type="ChEBI" id="CHEBI:16991"/>
    </ligand>
</feature>
<feature type="binding site" evidence="1">
    <location>
        <position position="169"/>
    </location>
    <ligand>
        <name>DNA</name>
        <dbReference type="ChEBI" id="CHEBI:16991"/>
    </ligand>
</feature>
<reference key="1">
    <citation type="journal article" date="2009" name="BMC Genomics">
        <title>Pseudogene accumulation in the evolutionary histories of Salmonella enterica serovars Paratyphi A and Typhi.</title>
        <authorList>
            <person name="Holt K.E."/>
            <person name="Thomson N.R."/>
            <person name="Wain J."/>
            <person name="Langridge G.C."/>
            <person name="Hasan R."/>
            <person name="Bhutta Z.A."/>
            <person name="Quail M.A."/>
            <person name="Norbertczak H."/>
            <person name="Walker D."/>
            <person name="Simmonds M."/>
            <person name="White B."/>
            <person name="Bason N."/>
            <person name="Mungall K."/>
            <person name="Dougan G."/>
            <person name="Parkhill J."/>
        </authorList>
    </citation>
    <scope>NUCLEOTIDE SEQUENCE [LARGE SCALE GENOMIC DNA]</scope>
    <source>
        <strain>AKU_12601</strain>
    </source>
</reference>
<organism>
    <name type="scientific">Salmonella paratyphi A (strain AKU_12601)</name>
    <dbReference type="NCBI Taxonomy" id="554290"/>
    <lineage>
        <taxon>Bacteria</taxon>
        <taxon>Pseudomonadati</taxon>
        <taxon>Pseudomonadota</taxon>
        <taxon>Gammaproteobacteria</taxon>
        <taxon>Enterobacterales</taxon>
        <taxon>Enterobacteriaceae</taxon>
        <taxon>Salmonella</taxon>
    </lineage>
</organism>
<evidence type="ECO:0000255" key="1">
    <source>
        <dbReference type="HAMAP-Rule" id="MF_01253"/>
    </source>
</evidence>
<dbReference type="EC" id="3.2.2.-" evidence="1"/>
<dbReference type="EC" id="4.2.99.18" evidence="1"/>
<dbReference type="EMBL" id="FM200053">
    <property type="protein sequence ID" value="CAR60074.1"/>
    <property type="molecule type" value="Genomic_DNA"/>
</dbReference>
<dbReference type="RefSeq" id="WP_001113959.1">
    <property type="nucleotide sequence ID" value="NC_011147.1"/>
</dbReference>
<dbReference type="SMR" id="B5BC82"/>
<dbReference type="KEGG" id="sek:SSPA1877"/>
<dbReference type="HOGENOM" id="CLU_038423_2_2_6"/>
<dbReference type="Proteomes" id="UP000001869">
    <property type="component" value="Chromosome"/>
</dbReference>
<dbReference type="GO" id="GO:0140078">
    <property type="term" value="F:class I DNA-(apurinic or apyrimidinic site) endonuclease activity"/>
    <property type="evidence" value="ECO:0007669"/>
    <property type="project" value="UniProtKB-EC"/>
</dbReference>
<dbReference type="GO" id="GO:0003684">
    <property type="term" value="F:damaged DNA binding"/>
    <property type="evidence" value="ECO:0007669"/>
    <property type="project" value="InterPro"/>
</dbReference>
<dbReference type="GO" id="GO:0000703">
    <property type="term" value="F:oxidized pyrimidine nucleobase lesion DNA N-glycosylase activity"/>
    <property type="evidence" value="ECO:0007669"/>
    <property type="project" value="UniProtKB-UniRule"/>
</dbReference>
<dbReference type="GO" id="GO:0008270">
    <property type="term" value="F:zinc ion binding"/>
    <property type="evidence" value="ECO:0007669"/>
    <property type="project" value="UniProtKB-UniRule"/>
</dbReference>
<dbReference type="GO" id="GO:0006284">
    <property type="term" value="P:base-excision repair"/>
    <property type="evidence" value="ECO:0007669"/>
    <property type="project" value="InterPro"/>
</dbReference>
<dbReference type="CDD" id="cd08965">
    <property type="entry name" value="EcNei-like_N"/>
    <property type="match status" value="1"/>
</dbReference>
<dbReference type="FunFam" id="1.10.8.50:FF:000005">
    <property type="entry name" value="Endonuclease 8"/>
    <property type="match status" value="1"/>
</dbReference>
<dbReference type="FunFam" id="3.20.190.10:FF:000002">
    <property type="entry name" value="Endonuclease 8"/>
    <property type="match status" value="1"/>
</dbReference>
<dbReference type="Gene3D" id="1.10.8.50">
    <property type="match status" value="1"/>
</dbReference>
<dbReference type="Gene3D" id="3.20.190.10">
    <property type="entry name" value="MutM-like, N-terminal"/>
    <property type="match status" value="1"/>
</dbReference>
<dbReference type="HAMAP" id="MF_01253">
    <property type="entry name" value="Endonuclease_8"/>
    <property type="match status" value="1"/>
</dbReference>
<dbReference type="InterPro" id="IPR015886">
    <property type="entry name" value="DNA_glyclase/AP_lyase_DNA-bd"/>
</dbReference>
<dbReference type="InterPro" id="IPR015887">
    <property type="entry name" value="DNA_glyclase_Znf_dom_DNA_BS"/>
</dbReference>
<dbReference type="InterPro" id="IPR044091">
    <property type="entry name" value="EcNei-like_N"/>
</dbReference>
<dbReference type="InterPro" id="IPR023713">
    <property type="entry name" value="Endonuclease-VIII"/>
</dbReference>
<dbReference type="InterPro" id="IPR012319">
    <property type="entry name" value="FPG_cat"/>
</dbReference>
<dbReference type="InterPro" id="IPR035937">
    <property type="entry name" value="MutM-like_N-ter"/>
</dbReference>
<dbReference type="InterPro" id="IPR010979">
    <property type="entry name" value="Ribosomal_uS13-like_H2TH"/>
</dbReference>
<dbReference type="InterPro" id="IPR000214">
    <property type="entry name" value="Znf_DNA_glyclase/AP_lyase"/>
</dbReference>
<dbReference type="InterPro" id="IPR010663">
    <property type="entry name" value="Znf_FPG/IleRS"/>
</dbReference>
<dbReference type="NCBIfam" id="NF007763">
    <property type="entry name" value="PRK10445.1"/>
    <property type="match status" value="1"/>
</dbReference>
<dbReference type="PANTHER" id="PTHR42697">
    <property type="entry name" value="ENDONUCLEASE 8"/>
    <property type="match status" value="1"/>
</dbReference>
<dbReference type="PANTHER" id="PTHR42697:SF1">
    <property type="entry name" value="ENDONUCLEASE 8"/>
    <property type="match status" value="1"/>
</dbReference>
<dbReference type="Pfam" id="PF01149">
    <property type="entry name" value="Fapy_DNA_glyco"/>
    <property type="match status" value="1"/>
</dbReference>
<dbReference type="Pfam" id="PF06831">
    <property type="entry name" value="H2TH"/>
    <property type="match status" value="1"/>
</dbReference>
<dbReference type="Pfam" id="PF06827">
    <property type="entry name" value="zf-FPG_IleRS"/>
    <property type="match status" value="1"/>
</dbReference>
<dbReference type="SMART" id="SM00898">
    <property type="entry name" value="Fapy_DNA_glyco"/>
    <property type="match status" value="1"/>
</dbReference>
<dbReference type="SMART" id="SM01232">
    <property type="entry name" value="H2TH"/>
    <property type="match status" value="1"/>
</dbReference>
<dbReference type="SUPFAM" id="SSF57716">
    <property type="entry name" value="Glucocorticoid receptor-like (DNA-binding domain)"/>
    <property type="match status" value="1"/>
</dbReference>
<dbReference type="SUPFAM" id="SSF81624">
    <property type="entry name" value="N-terminal domain of MutM-like DNA repair proteins"/>
    <property type="match status" value="1"/>
</dbReference>
<dbReference type="SUPFAM" id="SSF46946">
    <property type="entry name" value="S13-like H2TH domain"/>
    <property type="match status" value="1"/>
</dbReference>
<dbReference type="PROSITE" id="PS51068">
    <property type="entry name" value="FPG_CAT"/>
    <property type="match status" value="1"/>
</dbReference>
<dbReference type="PROSITE" id="PS01242">
    <property type="entry name" value="ZF_FPG_1"/>
    <property type="match status" value="1"/>
</dbReference>
<dbReference type="PROSITE" id="PS51066">
    <property type="entry name" value="ZF_FPG_2"/>
    <property type="match status" value="1"/>
</dbReference>
<sequence length="263" mass="29847">MPEGPEIRRAADNLEAAIKGKPLTDVWFAFAQLKPYESQLTGQIITRIETRGKALLTHFSNGLTLYSHNQLYGVWRVIDTGEIPQTTRILRVRLQTADKTILLYSASDIEMLTAEQLTTHPFLQRVGPDVLDARLTPEEVKARLLSPRFRNRQFSGLLLDQAFLAGLGNYLRVEILWQVGLTGQHKAKDLNEAQLNALSHALLDIPRLSYTTRGQADENKHHGALFRFKVFHRDGEACERCGGIIEKTTLSSRPFYWCPHCQK</sequence>
<name>END8_SALPK</name>
<proteinExistence type="inferred from homology"/>